<proteinExistence type="inferred from homology"/>
<comment type="function">
    <text evidence="1">Catalyzes oxygen-dependent 5-hydroxyuridine (ho5U) modification at position 34 in tRNAs.</text>
</comment>
<comment type="catalytic activity">
    <reaction evidence="1">
        <text>uridine(34) in tRNA + AH2 + O2 = 5-hydroxyuridine(34) in tRNA + A + H2O</text>
        <dbReference type="Rhea" id="RHEA:64224"/>
        <dbReference type="Rhea" id="RHEA-COMP:11727"/>
        <dbReference type="Rhea" id="RHEA-COMP:13381"/>
        <dbReference type="ChEBI" id="CHEBI:13193"/>
        <dbReference type="ChEBI" id="CHEBI:15377"/>
        <dbReference type="ChEBI" id="CHEBI:15379"/>
        <dbReference type="ChEBI" id="CHEBI:17499"/>
        <dbReference type="ChEBI" id="CHEBI:65315"/>
        <dbReference type="ChEBI" id="CHEBI:136877"/>
    </reaction>
</comment>
<comment type="similarity">
    <text evidence="1">Belongs to the TrhO family.</text>
</comment>
<sequence length="286" mass="31669">MAIPKIVLFYQFTPLADPEAIKLWQHSLAESNNLTGRIIVSPHGINATVGGDIEDVKRYVRGTRGYEPFRTADIKWSDGLGNDFPRLSVKARSEIVTFGAPDELKVDENGVVGGGVHLAPKELHELVDSRGDDVVFFDGRNAFEAEIGRFRDAVVPDVATTRDFVDELDSGKYDHLKGKAVVTYCTGGVRCEVLSSLMRSRGFDEVYQLDGGIVRYGETFGDRGLWDGSLYVFDKRMNIEFSSEAKTLGVCVDCGTPTPRYRNRIDGDGRTLELLCESCSPDLEQD</sequence>
<evidence type="ECO:0000255" key="1">
    <source>
        <dbReference type="HAMAP-Rule" id="MF_00469"/>
    </source>
</evidence>
<protein>
    <recommendedName>
        <fullName evidence="1">tRNA uridine(34) hydroxylase</fullName>
        <ecNumber evidence="1">1.14.-.-</ecNumber>
    </recommendedName>
    <alternativeName>
        <fullName evidence="1">tRNA hydroxylation protein O</fullName>
    </alternativeName>
</protein>
<reference key="1">
    <citation type="submission" date="2005-03" db="EMBL/GenBank/DDBJ databases">
        <title>Comparison of the complete genome sequences of Rhodococcus erythropolis PR4 and Rhodococcus opacus B4.</title>
        <authorList>
            <person name="Takarada H."/>
            <person name="Sekine M."/>
            <person name="Hosoyama A."/>
            <person name="Yamada R."/>
            <person name="Fujisawa T."/>
            <person name="Omata S."/>
            <person name="Shimizu A."/>
            <person name="Tsukatani N."/>
            <person name="Tanikawa S."/>
            <person name="Fujita N."/>
            <person name="Harayama S."/>
        </authorList>
    </citation>
    <scope>NUCLEOTIDE SEQUENCE [LARGE SCALE GENOMIC DNA]</scope>
    <source>
        <strain>PR4 / NBRC 100887</strain>
    </source>
</reference>
<dbReference type="EC" id="1.14.-.-" evidence="1"/>
<dbReference type="EMBL" id="AP008957">
    <property type="protein sequence ID" value="BAH33895.1"/>
    <property type="molecule type" value="Genomic_DNA"/>
</dbReference>
<dbReference type="RefSeq" id="WP_003944828.1">
    <property type="nucleotide sequence ID" value="NC_012490.1"/>
</dbReference>
<dbReference type="SMR" id="C0ZZW0"/>
<dbReference type="KEGG" id="rer:RER_31870"/>
<dbReference type="eggNOG" id="COG1054">
    <property type="taxonomic scope" value="Bacteria"/>
</dbReference>
<dbReference type="HOGENOM" id="CLU_038878_1_0_11"/>
<dbReference type="Proteomes" id="UP000002204">
    <property type="component" value="Chromosome"/>
</dbReference>
<dbReference type="GO" id="GO:0016705">
    <property type="term" value="F:oxidoreductase activity, acting on paired donors, with incorporation or reduction of molecular oxygen"/>
    <property type="evidence" value="ECO:0007669"/>
    <property type="project" value="UniProtKB-UniRule"/>
</dbReference>
<dbReference type="GO" id="GO:0006400">
    <property type="term" value="P:tRNA modification"/>
    <property type="evidence" value="ECO:0007669"/>
    <property type="project" value="UniProtKB-UniRule"/>
</dbReference>
<dbReference type="CDD" id="cd01518">
    <property type="entry name" value="RHOD_YceA"/>
    <property type="match status" value="1"/>
</dbReference>
<dbReference type="Gene3D" id="3.30.70.100">
    <property type="match status" value="1"/>
</dbReference>
<dbReference type="Gene3D" id="3.40.250.10">
    <property type="entry name" value="Rhodanese-like domain"/>
    <property type="match status" value="1"/>
</dbReference>
<dbReference type="HAMAP" id="MF_00469">
    <property type="entry name" value="TrhO"/>
    <property type="match status" value="1"/>
</dbReference>
<dbReference type="InterPro" id="IPR001763">
    <property type="entry name" value="Rhodanese-like_dom"/>
</dbReference>
<dbReference type="InterPro" id="IPR036873">
    <property type="entry name" value="Rhodanese-like_dom_sf"/>
</dbReference>
<dbReference type="InterPro" id="IPR022111">
    <property type="entry name" value="Rhodanese_C"/>
</dbReference>
<dbReference type="InterPro" id="IPR020936">
    <property type="entry name" value="TrhO"/>
</dbReference>
<dbReference type="InterPro" id="IPR040503">
    <property type="entry name" value="TRHO_N"/>
</dbReference>
<dbReference type="NCBIfam" id="NF001134">
    <property type="entry name" value="PRK00142.1-2"/>
    <property type="match status" value="1"/>
</dbReference>
<dbReference type="PANTHER" id="PTHR43268">
    <property type="entry name" value="THIOSULFATE SULFURTRANSFERASE/RHODANESE-LIKE DOMAIN-CONTAINING PROTEIN 2"/>
    <property type="match status" value="1"/>
</dbReference>
<dbReference type="PANTHER" id="PTHR43268:SF6">
    <property type="entry name" value="THIOSULFATE SULFURTRANSFERASE_RHODANESE-LIKE DOMAIN-CONTAINING PROTEIN 2"/>
    <property type="match status" value="1"/>
</dbReference>
<dbReference type="Pfam" id="PF00581">
    <property type="entry name" value="Rhodanese"/>
    <property type="match status" value="1"/>
</dbReference>
<dbReference type="Pfam" id="PF12368">
    <property type="entry name" value="Rhodanese_C"/>
    <property type="match status" value="1"/>
</dbReference>
<dbReference type="Pfam" id="PF17773">
    <property type="entry name" value="UPF0176_N"/>
    <property type="match status" value="1"/>
</dbReference>
<dbReference type="SMART" id="SM00450">
    <property type="entry name" value="RHOD"/>
    <property type="match status" value="1"/>
</dbReference>
<dbReference type="SUPFAM" id="SSF52821">
    <property type="entry name" value="Rhodanese/Cell cycle control phosphatase"/>
    <property type="match status" value="1"/>
</dbReference>
<dbReference type="PROSITE" id="PS50206">
    <property type="entry name" value="RHODANESE_3"/>
    <property type="match status" value="1"/>
</dbReference>
<keyword id="KW-0560">Oxidoreductase</keyword>
<keyword id="KW-0819">tRNA processing</keyword>
<accession>C0ZZW0</accession>
<gene>
    <name evidence="1" type="primary">trhO</name>
    <name type="ordered locus">RER_31870</name>
</gene>
<organism>
    <name type="scientific">Rhodococcus erythropolis (strain PR4 / NBRC 100887)</name>
    <dbReference type="NCBI Taxonomy" id="234621"/>
    <lineage>
        <taxon>Bacteria</taxon>
        <taxon>Bacillati</taxon>
        <taxon>Actinomycetota</taxon>
        <taxon>Actinomycetes</taxon>
        <taxon>Mycobacteriales</taxon>
        <taxon>Nocardiaceae</taxon>
        <taxon>Rhodococcus</taxon>
        <taxon>Rhodococcus erythropolis group</taxon>
    </lineage>
</organism>
<name>TRHO_RHOE4</name>
<feature type="chain" id="PRO_1000206340" description="tRNA uridine(34) hydroxylase">
    <location>
        <begin position="1"/>
        <end position="286"/>
    </location>
</feature>
<feature type="domain" description="Rhodanese" evidence="1">
    <location>
        <begin position="130"/>
        <end position="225"/>
    </location>
</feature>
<feature type="active site" description="Cysteine persulfide intermediate" evidence="1">
    <location>
        <position position="185"/>
    </location>
</feature>